<name>NUSB_BURMS</name>
<protein>
    <recommendedName>
        <fullName evidence="1">Transcription antitermination protein NusB</fullName>
    </recommendedName>
    <alternativeName>
        <fullName evidence="1">Antitermination factor NusB</fullName>
    </alternativeName>
</protein>
<proteinExistence type="inferred from homology"/>
<sequence length="145" mass="15981">MKKSARRQSRELATQGLYQWLLSNAAPGEIDAQLRGALGYDKADKTLLDTILHGVIREHATLAEAISPSLDRPIDQLSPVERAVLLIATYELTHQIETPYRVIINEAVELAKTFGGSDGYKYVNGVLDKLAVKLRPAETQARRGA</sequence>
<evidence type="ECO:0000255" key="1">
    <source>
        <dbReference type="HAMAP-Rule" id="MF_00073"/>
    </source>
</evidence>
<reference key="1">
    <citation type="journal article" date="2010" name="Genome Biol. Evol.">
        <title>Continuing evolution of Burkholderia mallei through genome reduction and large-scale rearrangements.</title>
        <authorList>
            <person name="Losada L."/>
            <person name="Ronning C.M."/>
            <person name="DeShazer D."/>
            <person name="Woods D."/>
            <person name="Fedorova N."/>
            <person name="Kim H.S."/>
            <person name="Shabalina S.A."/>
            <person name="Pearson T.R."/>
            <person name="Brinkac L."/>
            <person name="Tan P."/>
            <person name="Nandi T."/>
            <person name="Crabtree J."/>
            <person name="Badger J."/>
            <person name="Beckstrom-Sternberg S."/>
            <person name="Saqib M."/>
            <person name="Schutzer S.E."/>
            <person name="Keim P."/>
            <person name="Nierman W.C."/>
        </authorList>
    </citation>
    <scope>NUCLEOTIDE SEQUENCE [LARGE SCALE GENOMIC DNA]</scope>
    <source>
        <strain>SAVP1</strain>
    </source>
</reference>
<accession>A1V1K4</accession>
<comment type="function">
    <text evidence="1">Involved in transcription antitermination. Required for transcription of ribosomal RNA (rRNA) genes. Binds specifically to the boxA antiterminator sequence of the ribosomal RNA (rrn) operons.</text>
</comment>
<comment type="similarity">
    <text evidence="1">Belongs to the NusB family.</text>
</comment>
<keyword id="KW-0694">RNA-binding</keyword>
<keyword id="KW-0804">Transcription</keyword>
<keyword id="KW-0889">Transcription antitermination</keyword>
<keyword id="KW-0805">Transcription regulation</keyword>
<organism>
    <name type="scientific">Burkholderia mallei (strain SAVP1)</name>
    <dbReference type="NCBI Taxonomy" id="320388"/>
    <lineage>
        <taxon>Bacteria</taxon>
        <taxon>Pseudomonadati</taxon>
        <taxon>Pseudomonadota</taxon>
        <taxon>Betaproteobacteria</taxon>
        <taxon>Burkholderiales</taxon>
        <taxon>Burkholderiaceae</taxon>
        <taxon>Burkholderia</taxon>
        <taxon>pseudomallei group</taxon>
    </lineage>
</organism>
<gene>
    <name evidence="1" type="primary">nusB</name>
    <name type="ordered locus">BMASAVP1_A0762</name>
</gene>
<feature type="chain" id="PRO_1000023715" description="Transcription antitermination protein NusB">
    <location>
        <begin position="1"/>
        <end position="145"/>
    </location>
</feature>
<dbReference type="EMBL" id="CP000526">
    <property type="protein sequence ID" value="ABM50359.1"/>
    <property type="molecule type" value="Genomic_DNA"/>
</dbReference>
<dbReference type="RefSeq" id="WP_004185707.1">
    <property type="nucleotide sequence ID" value="NC_008785.1"/>
</dbReference>
<dbReference type="SMR" id="A1V1K4"/>
<dbReference type="GeneID" id="93061205"/>
<dbReference type="KEGG" id="bmv:BMASAVP1_A0762"/>
<dbReference type="HOGENOM" id="CLU_087843_4_1_4"/>
<dbReference type="GO" id="GO:0005829">
    <property type="term" value="C:cytosol"/>
    <property type="evidence" value="ECO:0007669"/>
    <property type="project" value="TreeGrafter"/>
</dbReference>
<dbReference type="GO" id="GO:0003723">
    <property type="term" value="F:RNA binding"/>
    <property type="evidence" value="ECO:0007669"/>
    <property type="project" value="UniProtKB-UniRule"/>
</dbReference>
<dbReference type="GO" id="GO:0006353">
    <property type="term" value="P:DNA-templated transcription termination"/>
    <property type="evidence" value="ECO:0007669"/>
    <property type="project" value="UniProtKB-UniRule"/>
</dbReference>
<dbReference type="GO" id="GO:0031564">
    <property type="term" value="P:transcription antitermination"/>
    <property type="evidence" value="ECO:0007669"/>
    <property type="project" value="UniProtKB-KW"/>
</dbReference>
<dbReference type="Gene3D" id="1.10.940.10">
    <property type="entry name" value="NusB-like"/>
    <property type="match status" value="1"/>
</dbReference>
<dbReference type="HAMAP" id="MF_00073">
    <property type="entry name" value="NusB"/>
    <property type="match status" value="1"/>
</dbReference>
<dbReference type="InterPro" id="IPR035926">
    <property type="entry name" value="NusB-like_sf"/>
</dbReference>
<dbReference type="InterPro" id="IPR011605">
    <property type="entry name" value="NusB_fam"/>
</dbReference>
<dbReference type="InterPro" id="IPR006027">
    <property type="entry name" value="NusB_RsmB_TIM44"/>
</dbReference>
<dbReference type="NCBIfam" id="TIGR01951">
    <property type="entry name" value="nusB"/>
    <property type="match status" value="1"/>
</dbReference>
<dbReference type="PANTHER" id="PTHR11078:SF3">
    <property type="entry name" value="ANTITERMINATION NUSB DOMAIN-CONTAINING PROTEIN"/>
    <property type="match status" value="1"/>
</dbReference>
<dbReference type="PANTHER" id="PTHR11078">
    <property type="entry name" value="N UTILIZATION SUBSTANCE PROTEIN B-RELATED"/>
    <property type="match status" value="1"/>
</dbReference>
<dbReference type="Pfam" id="PF01029">
    <property type="entry name" value="NusB"/>
    <property type="match status" value="1"/>
</dbReference>
<dbReference type="SUPFAM" id="SSF48013">
    <property type="entry name" value="NusB-like"/>
    <property type="match status" value="1"/>
</dbReference>